<sequence>MDIEIVTIGDELLLGFTIDTNAAHLAREFAALGVRIVRRATCGDDAESIAAAVREALDRTGAVITTGGLGPTADDMTKPAIASIFGRGMVMDAEVLANLEQRWLTRFGHTLPVSNRQQAMVPEGCTILANRHGSAPGIWLEDDHGRWVVMLPGVPREMRGMLADTILPLLRDRVPKDGPVIRSRTLRTANIAESALADRLGELARGVNGMPLAFLPGNDGVDLRLTSWSLPSRDAEGALTQAAALLREKVGRFIYGEGDDDLAALMLSECAMRDLTLAVAESCTGGMLGERLTAIPGSSRTVQGGVIAYANEVKTRELGVPAEMIAAHGAVSEPVARAMAEGVRQRFGTGIGIGITGIAGPDGGTPEKPVGTVWVAVDVEGDVRAVRALLPGNRFEIRYRAAQLALDRLRRAFAREAGDDAVGWTSRG</sequence>
<gene>
    <name type="ordered locus">GAU_1122</name>
</gene>
<dbReference type="EMBL" id="AP009153">
    <property type="protein sequence ID" value="BAH38164.1"/>
    <property type="molecule type" value="Genomic_DNA"/>
</dbReference>
<dbReference type="RefSeq" id="WP_012682611.1">
    <property type="nucleotide sequence ID" value="NC_012489.1"/>
</dbReference>
<dbReference type="SMR" id="C1A7F4"/>
<dbReference type="STRING" id="379066.GAU_1122"/>
<dbReference type="KEGG" id="gau:GAU_1122"/>
<dbReference type="eggNOG" id="COG1058">
    <property type="taxonomic scope" value="Bacteria"/>
</dbReference>
<dbReference type="eggNOG" id="COG1546">
    <property type="taxonomic scope" value="Bacteria"/>
</dbReference>
<dbReference type="HOGENOM" id="CLU_030805_9_3_0"/>
<dbReference type="OrthoDB" id="9801454at2"/>
<dbReference type="Proteomes" id="UP000002209">
    <property type="component" value="Chromosome"/>
</dbReference>
<dbReference type="CDD" id="cd00885">
    <property type="entry name" value="cinA"/>
    <property type="match status" value="1"/>
</dbReference>
<dbReference type="Gene3D" id="3.30.70.2860">
    <property type="match status" value="1"/>
</dbReference>
<dbReference type="Gene3D" id="3.90.950.20">
    <property type="entry name" value="CinA-like"/>
    <property type="match status" value="1"/>
</dbReference>
<dbReference type="Gene3D" id="3.40.980.10">
    <property type="entry name" value="MoaB/Mog-like domain"/>
    <property type="match status" value="1"/>
</dbReference>
<dbReference type="HAMAP" id="MF_00226_B">
    <property type="entry name" value="CinA_B"/>
    <property type="match status" value="1"/>
</dbReference>
<dbReference type="InterPro" id="IPR050101">
    <property type="entry name" value="CinA"/>
</dbReference>
<dbReference type="InterPro" id="IPR036653">
    <property type="entry name" value="CinA-like_C"/>
</dbReference>
<dbReference type="InterPro" id="IPR008136">
    <property type="entry name" value="CinA_C"/>
</dbReference>
<dbReference type="InterPro" id="IPR041424">
    <property type="entry name" value="CinA_KH"/>
</dbReference>
<dbReference type="InterPro" id="IPR008135">
    <property type="entry name" value="Competence-induced_CinA"/>
</dbReference>
<dbReference type="InterPro" id="IPR036425">
    <property type="entry name" value="MoaB/Mog-like_dom_sf"/>
</dbReference>
<dbReference type="InterPro" id="IPR001453">
    <property type="entry name" value="MoaB/Mog_dom"/>
</dbReference>
<dbReference type="NCBIfam" id="TIGR00200">
    <property type="entry name" value="cinA_nterm"/>
    <property type="match status" value="1"/>
</dbReference>
<dbReference type="NCBIfam" id="TIGR00199">
    <property type="entry name" value="PncC_domain"/>
    <property type="match status" value="1"/>
</dbReference>
<dbReference type="NCBIfam" id="NF001813">
    <property type="entry name" value="PRK00549.1"/>
    <property type="match status" value="1"/>
</dbReference>
<dbReference type="PANTHER" id="PTHR13939">
    <property type="entry name" value="NICOTINAMIDE-NUCLEOTIDE AMIDOHYDROLASE PNCC"/>
    <property type="match status" value="1"/>
</dbReference>
<dbReference type="PANTHER" id="PTHR13939:SF0">
    <property type="entry name" value="NMN AMIDOHYDROLASE-LIKE PROTEIN YFAY"/>
    <property type="match status" value="1"/>
</dbReference>
<dbReference type="Pfam" id="PF02464">
    <property type="entry name" value="CinA"/>
    <property type="match status" value="1"/>
</dbReference>
<dbReference type="Pfam" id="PF18146">
    <property type="entry name" value="CinA_KH"/>
    <property type="match status" value="1"/>
</dbReference>
<dbReference type="Pfam" id="PF00994">
    <property type="entry name" value="MoCF_biosynth"/>
    <property type="match status" value="1"/>
</dbReference>
<dbReference type="PIRSF" id="PIRSF006728">
    <property type="entry name" value="CinA"/>
    <property type="match status" value="1"/>
</dbReference>
<dbReference type="SMART" id="SM00852">
    <property type="entry name" value="MoCF_biosynth"/>
    <property type="match status" value="1"/>
</dbReference>
<dbReference type="SUPFAM" id="SSF142433">
    <property type="entry name" value="CinA-like"/>
    <property type="match status" value="1"/>
</dbReference>
<dbReference type="SUPFAM" id="SSF53218">
    <property type="entry name" value="Molybdenum cofactor biosynthesis proteins"/>
    <property type="match status" value="1"/>
</dbReference>
<reference key="1">
    <citation type="submission" date="2006-03" db="EMBL/GenBank/DDBJ databases">
        <title>Complete genome sequence of Gemmatimonas aurantiaca T-27 that represents a novel phylum Gemmatimonadetes.</title>
        <authorList>
            <person name="Takasaki K."/>
            <person name="Ichikawa N."/>
            <person name="Miura H."/>
            <person name="Matsushita S."/>
            <person name="Watanabe Y."/>
            <person name="Oguchi A."/>
            <person name="Ankai A."/>
            <person name="Yashiro I."/>
            <person name="Takahashi M."/>
            <person name="Terui Y."/>
            <person name="Fukui S."/>
            <person name="Yokoyama H."/>
            <person name="Tanikawa S."/>
            <person name="Hanada S."/>
            <person name="Kamagata Y."/>
            <person name="Fujita N."/>
        </authorList>
    </citation>
    <scope>NUCLEOTIDE SEQUENCE [LARGE SCALE GENOMIC DNA]</scope>
    <source>
        <strain>DSM 14586 / JCM 11422 / NBRC 100505 / T-27</strain>
    </source>
</reference>
<name>CINAL_GEMAT</name>
<organism>
    <name type="scientific">Gemmatimonas aurantiaca (strain DSM 14586 / JCM 11422 / NBRC 100505 / T-27)</name>
    <dbReference type="NCBI Taxonomy" id="379066"/>
    <lineage>
        <taxon>Bacteria</taxon>
        <taxon>Pseudomonadati</taxon>
        <taxon>Gemmatimonadota</taxon>
        <taxon>Gemmatimonadia</taxon>
        <taxon>Gemmatimonadales</taxon>
        <taxon>Gemmatimonadaceae</taxon>
        <taxon>Gemmatimonas</taxon>
    </lineage>
</organism>
<accession>C1A7F4</accession>
<feature type="chain" id="PRO_1000204325" description="CinA-like protein">
    <location>
        <begin position="1"/>
        <end position="428"/>
    </location>
</feature>
<keyword id="KW-1185">Reference proteome</keyword>
<protein>
    <recommendedName>
        <fullName evidence="1">CinA-like protein</fullName>
    </recommendedName>
</protein>
<evidence type="ECO:0000255" key="1">
    <source>
        <dbReference type="HAMAP-Rule" id="MF_00226"/>
    </source>
</evidence>
<comment type="similarity">
    <text evidence="1">Belongs to the CinA family.</text>
</comment>
<proteinExistence type="inferred from homology"/>